<accession>Q9LTX3</accession>
<accession>F4K7H2</accession>
<accession>Q8L7T7</accession>
<accession>Q8L9L3</accession>
<gene>
    <name type="primary">PPOX1</name>
    <name type="synonym">PDX3</name>
    <name type="synonym">PDXH</name>
    <name type="ordered locus">At5g49970</name>
    <name type="ORF">K9P8.11</name>
</gene>
<reference key="1">
    <citation type="journal article" date="2000" name="DNA Res.">
        <title>Structural analysis of Arabidopsis thaliana chromosome 5. X. Sequence features of the regions of 3,076,755 bp covered by sixty P1 and TAC clones.</title>
        <authorList>
            <person name="Sato S."/>
            <person name="Nakamura Y."/>
            <person name="Kaneko T."/>
            <person name="Katoh T."/>
            <person name="Asamizu E."/>
            <person name="Kotani H."/>
            <person name="Tabata S."/>
        </authorList>
    </citation>
    <scope>NUCLEOTIDE SEQUENCE [LARGE SCALE GENOMIC DNA]</scope>
    <source>
        <strain>cv. Columbia</strain>
    </source>
</reference>
<reference key="2">
    <citation type="journal article" date="2017" name="Plant J.">
        <title>Araport11: a complete reannotation of the Arabidopsis thaliana reference genome.</title>
        <authorList>
            <person name="Cheng C.Y."/>
            <person name="Krishnakumar V."/>
            <person name="Chan A.P."/>
            <person name="Thibaud-Nissen F."/>
            <person name="Schobel S."/>
            <person name="Town C.D."/>
        </authorList>
    </citation>
    <scope>GENOME REANNOTATION</scope>
    <source>
        <strain>cv. Columbia</strain>
    </source>
</reference>
<reference key="3">
    <citation type="journal article" date="2003" name="Science">
        <title>Empirical analysis of transcriptional activity in the Arabidopsis genome.</title>
        <authorList>
            <person name="Yamada K."/>
            <person name="Lim J."/>
            <person name="Dale J.M."/>
            <person name="Chen H."/>
            <person name="Shinn P."/>
            <person name="Palm C.J."/>
            <person name="Southwick A.M."/>
            <person name="Wu H.C."/>
            <person name="Kim C.J."/>
            <person name="Nguyen M."/>
            <person name="Pham P.K."/>
            <person name="Cheuk R.F."/>
            <person name="Karlin-Newmann G."/>
            <person name="Liu S.X."/>
            <person name="Lam B."/>
            <person name="Sakano H."/>
            <person name="Wu T."/>
            <person name="Yu G."/>
            <person name="Miranda M."/>
            <person name="Quach H.L."/>
            <person name="Tripp M."/>
            <person name="Chang C.H."/>
            <person name="Lee J.M."/>
            <person name="Toriumi M.J."/>
            <person name="Chan M.M."/>
            <person name="Tang C.C."/>
            <person name="Onodera C.S."/>
            <person name="Deng J.M."/>
            <person name="Akiyama K."/>
            <person name="Ansari Y."/>
            <person name="Arakawa T."/>
            <person name="Banh J."/>
            <person name="Banno F."/>
            <person name="Bowser L."/>
            <person name="Brooks S.Y."/>
            <person name="Carninci P."/>
            <person name="Chao Q."/>
            <person name="Choy N."/>
            <person name="Enju A."/>
            <person name="Goldsmith A.D."/>
            <person name="Gurjal M."/>
            <person name="Hansen N.F."/>
            <person name="Hayashizaki Y."/>
            <person name="Johnson-Hopson C."/>
            <person name="Hsuan V.W."/>
            <person name="Iida K."/>
            <person name="Karnes M."/>
            <person name="Khan S."/>
            <person name="Koesema E."/>
            <person name="Ishida J."/>
            <person name="Jiang P.X."/>
            <person name="Jones T."/>
            <person name="Kawai J."/>
            <person name="Kamiya A."/>
            <person name="Meyers C."/>
            <person name="Nakajima M."/>
            <person name="Narusaka M."/>
            <person name="Seki M."/>
            <person name="Sakurai T."/>
            <person name="Satou M."/>
            <person name="Tamse R."/>
            <person name="Vaysberg M."/>
            <person name="Wallender E.K."/>
            <person name="Wong C."/>
            <person name="Yamamura Y."/>
            <person name="Yuan S."/>
            <person name="Shinozaki K."/>
            <person name="Davis R.W."/>
            <person name="Theologis A."/>
            <person name="Ecker J.R."/>
        </authorList>
    </citation>
    <scope>NUCLEOTIDE SEQUENCE [LARGE SCALE MRNA] OF 12-530 (ISOFORM 1)</scope>
    <source>
        <strain>cv. Columbia</strain>
    </source>
</reference>
<reference key="4">
    <citation type="submission" date="2002-03" db="EMBL/GenBank/DDBJ databases">
        <title>Full-length cDNA from Arabidopsis thaliana.</title>
        <authorList>
            <person name="Brover V.V."/>
            <person name="Troukhan M.E."/>
            <person name="Alexandrov N.A."/>
            <person name="Lu Y.-P."/>
            <person name="Flavell R.B."/>
            <person name="Feldmann K.A."/>
        </authorList>
    </citation>
    <scope>NUCLEOTIDE SEQUENCE [LARGE SCALE MRNA] OF 34-530 (ISOFORM 1)</scope>
</reference>
<reference key="5">
    <citation type="journal article" date="2007" name="FEBS Lett.">
        <title>Identification of a pyridoxine (pyridoxamine) 5'-phosphate oxidase from Arabidopsis thaliana.</title>
        <authorList>
            <person name="Sang Y."/>
            <person name="Barbosa J.M."/>
            <person name="Wu H."/>
            <person name="Locy R.D."/>
            <person name="Singh N.K."/>
        </authorList>
    </citation>
    <scope>FUNCTION AS PYRIDOXINE/PYRIDOXAMINE 5'-PHOSPHATE OXIDASE</scope>
    <scope>CATALYTIC ACTIVITY</scope>
</reference>
<reference key="6">
    <citation type="journal article" date="2007" name="Plant Physiol.">
        <title>Vitamer levels, stress response, enzyme activity, and gene regulation of Arabidopsis lines mutant in the pyridoxine/pyridoxamine 5'-phosphate oxidase (PDX3) and the pyridoxal kinase (SOS4) genes involved in the vitamin B6 salvage pathway.</title>
        <authorList>
            <person name="Gonzalez E."/>
            <person name="Danehower D."/>
            <person name="Daub M.E."/>
        </authorList>
    </citation>
    <scope>FUNCTION AS PYRIDOXINE/PYRIDOXAMINE 5'-PHOSPHATE OXIDASE</scope>
    <scope>CATALYTIC ACTIVITY</scope>
</reference>
<reference key="7">
    <citation type="journal article" date="2011" name="Plant Physiol. Biochem.">
        <title>Expression, in vivo localization and phylogenetic analysis of a pyridoxine 5'-phosphate oxidase in Arabidopsis thaliana.</title>
        <authorList>
            <person name="Sang Y."/>
            <person name="Locy R.D."/>
            <person name="Goertzen L.R."/>
            <person name="Rashotte A.M."/>
            <person name="Si Y."/>
            <person name="Kang K."/>
            <person name="Singh N.K."/>
        </authorList>
    </citation>
    <scope>TISSUE SPECIFICITY</scope>
    <scope>INDUCTION</scope>
    <scope>ALTERNATIVE SPLICING</scope>
    <scope>SUBCELLULAR LOCATION</scope>
</reference>
<reference key="8">
    <citation type="journal article" date="2012" name="Mol. Cell. Proteomics">
        <title>Comparative large-scale characterisation of plant vs. mammal proteins reveals similar and idiosyncratic N-alpha acetylation features.</title>
        <authorList>
            <person name="Bienvenut W.V."/>
            <person name="Sumpton D."/>
            <person name="Martinez A."/>
            <person name="Lilla S."/>
            <person name="Espagne C."/>
            <person name="Meinnel T."/>
            <person name="Giglione C."/>
        </authorList>
    </citation>
    <scope>ACETYLATION [LARGE SCALE ANALYSIS] AT MET-65</scope>
    <scope>CLEAVAGE OF TRANSIT PEPTIDE [LARGE SCALE ANALYSIS] AFTER ASN-64</scope>
    <scope>IDENTIFICATION BY MASS SPECTROMETRY [LARGE SCALE ANALYSIS]</scope>
</reference>
<name>PPOX1_ARATH</name>
<proteinExistence type="evidence at protein level"/>
<comment type="function">
    <text evidence="4 5">Catalyzes the oxidation of either pyridoxine 5'-phosphate (PNP) or pyridoxamine 5'-phosphate (PMP) into pyridoxal 5'-phosphate (PLP). Involved in the PLP salvage pathway. Has a higher preference for PNP over PMP. May also catalyze the epimerization of the S- and R-forms of NAD(P)HX, a damaged form of NAD(P)H that is a result of enzymatic or heat-dependent hydration. This is a prerequisite for the S-specific NAD(P)H-hydrate dehydratase to allow the repair of both epimers of NAD(P)HX.</text>
</comment>
<comment type="catalytic activity">
    <reaction evidence="4 5">
        <text>pyridoxamine 5'-phosphate + O2 + H2O = pyridoxal 5'-phosphate + H2O2 + NH4(+)</text>
        <dbReference type="Rhea" id="RHEA:15817"/>
        <dbReference type="ChEBI" id="CHEBI:15377"/>
        <dbReference type="ChEBI" id="CHEBI:15379"/>
        <dbReference type="ChEBI" id="CHEBI:16240"/>
        <dbReference type="ChEBI" id="CHEBI:28938"/>
        <dbReference type="ChEBI" id="CHEBI:58451"/>
        <dbReference type="ChEBI" id="CHEBI:597326"/>
        <dbReference type="EC" id="1.4.3.5"/>
    </reaction>
</comment>
<comment type="catalytic activity">
    <reaction>
        <text>pyridoxine 5'-phosphate + O2 = pyridoxal 5'-phosphate + H2O2</text>
        <dbReference type="Rhea" id="RHEA:15149"/>
        <dbReference type="ChEBI" id="CHEBI:15379"/>
        <dbReference type="ChEBI" id="CHEBI:16240"/>
        <dbReference type="ChEBI" id="CHEBI:58589"/>
        <dbReference type="ChEBI" id="CHEBI:597326"/>
        <dbReference type="EC" id="1.4.3.5"/>
    </reaction>
</comment>
<comment type="catalytic activity">
    <reaction evidence="7">
        <text>(6R)-NADHX = (6S)-NADHX</text>
        <dbReference type="Rhea" id="RHEA:32215"/>
        <dbReference type="ChEBI" id="CHEBI:64074"/>
        <dbReference type="ChEBI" id="CHEBI:64075"/>
        <dbReference type="EC" id="5.1.99.6"/>
    </reaction>
</comment>
<comment type="catalytic activity">
    <reaction evidence="7">
        <text>(6R)-NADPHX = (6S)-NADPHX</text>
        <dbReference type="Rhea" id="RHEA:32227"/>
        <dbReference type="ChEBI" id="CHEBI:64076"/>
        <dbReference type="ChEBI" id="CHEBI:64077"/>
        <dbReference type="EC" id="5.1.99.6"/>
    </reaction>
</comment>
<comment type="cofactor">
    <cofactor evidence="1">
        <name>FMN</name>
        <dbReference type="ChEBI" id="CHEBI:58210"/>
    </cofactor>
    <text evidence="1">Binds 1 FMN per subunit.</text>
</comment>
<comment type="cofactor">
    <cofactor evidence="1">
        <name>K(+)</name>
        <dbReference type="ChEBI" id="CHEBI:29103"/>
    </cofactor>
    <text evidence="1">Binds 1 potassium ion per subunit.</text>
</comment>
<comment type="pathway">
    <text>Cofactor metabolism; pyridoxal 5'-phosphate salvage; pyridoxal 5'-phosphate from pyridoxamine 5'-phosphate: step 1/1.</text>
</comment>
<comment type="pathway">
    <text>Cofactor metabolism; pyridoxal 5'-phosphate salvage; pyridoxal 5'-phosphate from pyridoxine 5'-phosphate: step 1/1.</text>
</comment>
<comment type="subunit">
    <text evidence="1">Homodimer.</text>
</comment>
<comment type="subcellular location">
    <subcellularLocation>
        <location evidence="6">Plastid</location>
        <location evidence="6">Chloroplast</location>
    </subcellularLocation>
</comment>
<comment type="alternative products">
    <event type="alternative splicing"/>
    <isoform>
        <id>Q9LTX3-1</id>
        <name>1</name>
        <sequence type="displayed"/>
    </isoform>
    <isoform>
        <id>Q9LTX3-2</id>
        <name>2</name>
        <sequence type="described" ref="VSP_044534 VSP_044535"/>
    </isoform>
</comment>
<comment type="tissue specificity">
    <text evidence="6">Expressed in leaves, stems, flowers and roots.</text>
</comment>
<comment type="induction">
    <text evidence="6">Circadian regulation. Up-regulated by light, heat, jasmonic acid, ethylene and abscisic acid treatments. Down-regulated by drought and salt treatment. Not induced by UV irradiation.</text>
</comment>
<comment type="domain">
    <text>Most plant PPOX proteins have both a pyridoxamine 5'-phosphate oxidase domain and an extra YjeF N-terminal domain.</text>
</comment>
<comment type="miscellaneous">
    <text evidence="8">Mutants with reduced expression of PPOX1 (RNAi) have lower levels of total B6 vitamers, a reduced growth and are sensitive to high light.</text>
</comment>
<comment type="miscellaneous">
    <molecule>Isoform 2</molecule>
    <text evidence="7">Not detected in roots.</text>
</comment>
<comment type="similarity">
    <text evidence="7">In the N-terminal section; belongs to the NnrE/AIBP family.</text>
</comment>
<comment type="similarity">
    <text evidence="7">In the C-terminal section; belongs to the pyridoxamine 5'-phosphate oxidase family.</text>
</comment>
<comment type="sequence caution" evidence="7">
    <conflict type="erroneous initiation">
        <sequence resource="EMBL-CDS" id="AAM65907"/>
    </conflict>
    <text>Truncated N-terminus.</text>
</comment>
<comment type="sequence caution" evidence="7">
    <conflict type="erroneous initiation">
        <sequence resource="EMBL-CDS" id="AAM83249"/>
    </conflict>
    <text>Truncated N-terminus.</text>
</comment>
<feature type="transit peptide" description="Chloroplast" evidence="9">
    <location>
        <begin position="1"/>
        <end position="64"/>
    </location>
</feature>
<feature type="chain" id="PRO_0000420549" description="Pyridoxine/pyridoxamine 5'-phosphate oxidase 1, chloroplastic">
    <location>
        <begin position="65"/>
        <end position="530"/>
    </location>
</feature>
<feature type="domain" description="YjeF N-terminal">
    <location>
        <begin position="81"/>
        <end position="297"/>
    </location>
</feature>
<feature type="binding site" evidence="1">
    <location>
        <begin position="131"/>
        <end position="135"/>
    </location>
    <ligand>
        <name>(6S)-NADPHX</name>
        <dbReference type="ChEBI" id="CHEBI:64076"/>
    </ligand>
</feature>
<feature type="binding site" evidence="1">
    <location>
        <position position="132"/>
    </location>
    <ligand>
        <name>K(+)</name>
        <dbReference type="ChEBI" id="CHEBI:29103"/>
    </ligand>
</feature>
<feature type="binding site" evidence="1">
    <location>
        <position position="196"/>
    </location>
    <ligand>
        <name>K(+)</name>
        <dbReference type="ChEBI" id="CHEBI:29103"/>
    </ligand>
</feature>
<feature type="binding site" evidence="1">
    <location>
        <begin position="200"/>
        <end position="206"/>
    </location>
    <ligand>
        <name>(6S)-NADPHX</name>
        <dbReference type="ChEBI" id="CHEBI:64076"/>
    </ligand>
</feature>
<feature type="binding site" evidence="1">
    <location>
        <position position="238"/>
    </location>
    <ligand>
        <name>(6S)-NADPHX</name>
        <dbReference type="ChEBI" id="CHEBI:64076"/>
    </ligand>
</feature>
<feature type="binding site" evidence="1">
    <location>
        <position position="241"/>
    </location>
    <ligand>
        <name>K(+)</name>
        <dbReference type="ChEBI" id="CHEBI:29103"/>
    </ligand>
</feature>
<feature type="binding site" evidence="2">
    <location>
        <begin position="247"/>
        <end position="250"/>
    </location>
    <ligand>
        <name>pyridoxal 5'-phosphate</name>
        <dbReference type="ChEBI" id="CHEBI:597326"/>
    </ligand>
</feature>
<feature type="binding site" evidence="1">
    <location>
        <begin position="321"/>
        <end position="324"/>
    </location>
    <ligand>
        <name>substrate</name>
    </ligand>
</feature>
<feature type="binding site" evidence="2">
    <location>
        <begin position="325"/>
        <end position="327"/>
    </location>
    <ligand>
        <name>pyridoxal 5'-phosphate</name>
        <dbReference type="ChEBI" id="CHEBI:597326"/>
    </ligand>
</feature>
<feature type="binding site" evidence="3">
    <location>
        <begin position="374"/>
        <end position="377"/>
    </location>
    <ligand>
        <name>FMN</name>
        <dbReference type="ChEBI" id="CHEBI:58210"/>
    </ligand>
</feature>
<feature type="binding site" evidence="3">
    <location>
        <position position="379"/>
    </location>
    <ligand>
        <name>pyridoxal 5'-phosphate</name>
        <dbReference type="ChEBI" id="CHEBI:597326"/>
    </ligand>
</feature>
<feature type="binding site" evidence="3">
    <location>
        <begin position="389"/>
        <end position="390"/>
    </location>
    <ligand>
        <name>FMN</name>
        <dbReference type="ChEBI" id="CHEBI:58210"/>
    </ligand>
</feature>
<feature type="binding site" evidence="3">
    <location>
        <begin position="395"/>
        <end position="396"/>
    </location>
    <ligand>
        <name>FMN</name>
        <dbReference type="ChEBI" id="CHEBI:58210"/>
    </ligand>
</feature>
<feature type="binding site" evidence="2">
    <location>
        <position position="418"/>
    </location>
    <ligand>
        <name>FMN</name>
        <dbReference type="ChEBI" id="CHEBI:58210"/>
    </ligand>
</feature>
<feature type="binding site" evidence="3">
    <location>
        <position position="436"/>
    </location>
    <ligand>
        <name>pyridoxal 5'-phosphate</name>
        <dbReference type="ChEBI" id="CHEBI:597326"/>
    </ligand>
</feature>
<feature type="binding site" evidence="3">
    <location>
        <position position="440"/>
    </location>
    <ligand>
        <name>pyridoxal 5'-phosphate</name>
        <dbReference type="ChEBI" id="CHEBI:597326"/>
    </ligand>
</feature>
<feature type="binding site" evidence="3">
    <location>
        <position position="444"/>
    </location>
    <ligand>
        <name>pyridoxal 5'-phosphate</name>
        <dbReference type="ChEBI" id="CHEBI:597326"/>
    </ligand>
</feature>
<feature type="binding site" evidence="3">
    <location>
        <begin position="453"/>
        <end position="454"/>
    </location>
    <ligand>
        <name>FMN</name>
        <dbReference type="ChEBI" id="CHEBI:58210"/>
    </ligand>
</feature>
<feature type="binding site" evidence="2">
    <location>
        <position position="499"/>
    </location>
    <ligand>
        <name>FMN</name>
        <dbReference type="ChEBI" id="CHEBI:58210"/>
    </ligand>
</feature>
<feature type="binding site" evidence="2">
    <location>
        <begin position="505"/>
        <end position="507"/>
    </location>
    <ligand>
        <name>pyridoxal 5'-phosphate</name>
        <dbReference type="ChEBI" id="CHEBI:597326"/>
    </ligand>
</feature>
<feature type="binding site" evidence="2">
    <location>
        <position position="509"/>
    </location>
    <ligand>
        <name>FMN</name>
        <dbReference type="ChEBI" id="CHEBI:58210"/>
    </ligand>
</feature>
<feature type="modified residue" description="N-acetylmethionine" evidence="9">
    <location>
        <position position="65"/>
    </location>
</feature>
<feature type="splice variant" id="VSP_044534" description="In isoform 2." evidence="7">
    <location>
        <begin position="261"/>
        <end position="271"/>
    </location>
</feature>
<feature type="splice variant" id="VSP_044535" description="In isoform 2." evidence="7">
    <location>
        <begin position="478"/>
        <end position="530"/>
    </location>
</feature>
<feature type="sequence conflict" description="In Ref. 4; AAM65907." evidence="7" ref="4">
    <original>S</original>
    <variation>Y</variation>
    <location>
        <position position="241"/>
    </location>
</feature>
<protein>
    <recommendedName>
        <fullName>Pyridoxine/pyridoxamine 5'-phosphate oxidase 1, chloroplastic</fullName>
        <shortName>AtPPOX1</shortName>
    </recommendedName>
    <domain>
        <recommendedName>
            <fullName>Pyridoxine/pyridoxamine 5'-phosphate oxidase</fullName>
            <ecNumber evidence="4 5">1.4.3.5</ecNumber>
        </recommendedName>
        <alternativeName>
            <fullName>PNP/PMP oxidase</fullName>
            <shortName>PNPOx</shortName>
        </alternativeName>
        <alternativeName>
            <fullName>Pyridoxal 5'-phosphate synthase</fullName>
        </alternativeName>
    </domain>
    <domain>
        <recommendedName>
            <fullName>Probable NAD(P)HX epimerase</fullName>
            <ecNumber evidence="7">5.1.99.6</ecNumber>
        </recommendedName>
    </domain>
</protein>
<organism>
    <name type="scientific">Arabidopsis thaliana</name>
    <name type="common">Mouse-ear cress</name>
    <dbReference type="NCBI Taxonomy" id="3702"/>
    <lineage>
        <taxon>Eukaryota</taxon>
        <taxon>Viridiplantae</taxon>
        <taxon>Streptophyta</taxon>
        <taxon>Embryophyta</taxon>
        <taxon>Tracheophyta</taxon>
        <taxon>Spermatophyta</taxon>
        <taxon>Magnoliopsida</taxon>
        <taxon>eudicotyledons</taxon>
        <taxon>Gunneridae</taxon>
        <taxon>Pentapetalae</taxon>
        <taxon>rosids</taxon>
        <taxon>malvids</taxon>
        <taxon>Brassicales</taxon>
        <taxon>Brassicaceae</taxon>
        <taxon>Camelineae</taxon>
        <taxon>Arabidopsis</taxon>
    </lineage>
</organism>
<keyword id="KW-0007">Acetylation</keyword>
<keyword id="KW-0025">Alternative splicing</keyword>
<keyword id="KW-0150">Chloroplast</keyword>
<keyword id="KW-0285">Flavoprotein</keyword>
<keyword id="KW-0288">FMN</keyword>
<keyword id="KW-0413">Isomerase</keyword>
<keyword id="KW-0479">Metal-binding</keyword>
<keyword id="KW-0511">Multifunctional enzyme</keyword>
<keyword id="KW-0520">NAD</keyword>
<keyword id="KW-0547">Nucleotide-binding</keyword>
<keyword id="KW-0560">Oxidoreductase</keyword>
<keyword id="KW-0934">Plastid</keyword>
<keyword id="KW-0630">Potassium</keyword>
<keyword id="KW-0664">Pyridoxine biosynthesis</keyword>
<keyword id="KW-1185">Reference proteome</keyword>
<keyword id="KW-0809">Transit peptide</keyword>
<dbReference type="EC" id="1.4.3.5" evidence="4 5"/>
<dbReference type="EC" id="5.1.99.6" evidence="7"/>
<dbReference type="EMBL" id="AB024032">
    <property type="protein sequence ID" value="BAA97018.1"/>
    <property type="molecule type" value="Genomic_DNA"/>
</dbReference>
<dbReference type="EMBL" id="CP002688">
    <property type="protein sequence ID" value="AED95878.1"/>
    <property type="molecule type" value="Genomic_DNA"/>
</dbReference>
<dbReference type="EMBL" id="CP002688">
    <property type="protein sequence ID" value="AED95879.1"/>
    <property type="molecule type" value="Genomic_DNA"/>
</dbReference>
<dbReference type="EMBL" id="AY127025">
    <property type="protein sequence ID" value="AAM83249.1"/>
    <property type="status" value="ALT_INIT"/>
    <property type="molecule type" value="mRNA"/>
</dbReference>
<dbReference type="EMBL" id="BT000605">
    <property type="protein sequence ID" value="AAN18174.1"/>
    <property type="molecule type" value="mRNA"/>
</dbReference>
<dbReference type="EMBL" id="AY088368">
    <property type="protein sequence ID" value="AAM65907.1"/>
    <property type="status" value="ALT_INIT"/>
    <property type="molecule type" value="mRNA"/>
</dbReference>
<dbReference type="RefSeq" id="NP_568717.2">
    <molecule id="Q9LTX3-1"/>
    <property type="nucleotide sequence ID" value="NM_124376.4"/>
</dbReference>
<dbReference type="RefSeq" id="NP_974918.1">
    <molecule id="Q9LTX3-2"/>
    <property type="nucleotide sequence ID" value="NM_203189.2"/>
</dbReference>
<dbReference type="SMR" id="Q9LTX3"/>
<dbReference type="BioGRID" id="20307">
    <property type="interactions" value="10"/>
</dbReference>
<dbReference type="FunCoup" id="Q9LTX3">
    <property type="interactions" value="1065"/>
</dbReference>
<dbReference type="STRING" id="3702.Q9LTX3"/>
<dbReference type="iPTMnet" id="Q9LTX3"/>
<dbReference type="PaxDb" id="3702-AT5G49970.1"/>
<dbReference type="ProteomicsDB" id="236582">
    <molecule id="Q9LTX3-1"/>
</dbReference>
<dbReference type="EnsemblPlants" id="AT5G49970.1">
    <molecule id="Q9LTX3-1"/>
    <property type="protein sequence ID" value="AT5G49970.1"/>
    <property type="gene ID" value="AT5G49970"/>
</dbReference>
<dbReference type="EnsemblPlants" id="AT5G49970.2">
    <molecule id="Q9LTX3-2"/>
    <property type="protein sequence ID" value="AT5G49970.2"/>
    <property type="gene ID" value="AT5G49970"/>
</dbReference>
<dbReference type="GeneID" id="835061"/>
<dbReference type="Gramene" id="AT5G49970.1">
    <molecule id="Q9LTX3-1"/>
    <property type="protein sequence ID" value="AT5G49970.1"/>
    <property type="gene ID" value="AT5G49970"/>
</dbReference>
<dbReference type="Gramene" id="AT5G49970.2">
    <molecule id="Q9LTX3-2"/>
    <property type="protein sequence ID" value="AT5G49970.2"/>
    <property type="gene ID" value="AT5G49970"/>
</dbReference>
<dbReference type="KEGG" id="ath:AT5G49970"/>
<dbReference type="Araport" id="AT5G49970"/>
<dbReference type="TAIR" id="AT5G49970">
    <property type="gene designation" value="PPOX"/>
</dbReference>
<dbReference type="eggNOG" id="KOG2585">
    <property type="taxonomic scope" value="Eukaryota"/>
</dbReference>
<dbReference type="eggNOG" id="KOG2586">
    <property type="taxonomic scope" value="Eukaryota"/>
</dbReference>
<dbReference type="HOGENOM" id="CLU_032263_1_1_1"/>
<dbReference type="InParanoid" id="Q9LTX3"/>
<dbReference type="OMA" id="DPFDQFR"/>
<dbReference type="PhylomeDB" id="Q9LTX3"/>
<dbReference type="BioCyc" id="ARA:AT5G49970-MONOMER"/>
<dbReference type="BioCyc" id="MetaCyc:MONOMER-17901"/>
<dbReference type="BRENDA" id="5.1.99.6">
    <property type="organism ID" value="399"/>
</dbReference>
<dbReference type="UniPathway" id="UPA01068">
    <property type="reaction ID" value="UER00304"/>
</dbReference>
<dbReference type="UniPathway" id="UPA01068">
    <property type="reaction ID" value="UER00305"/>
</dbReference>
<dbReference type="PRO" id="PR:Q9LTX3"/>
<dbReference type="Proteomes" id="UP000006548">
    <property type="component" value="Chromosome 5"/>
</dbReference>
<dbReference type="ExpressionAtlas" id="Q9LTX3">
    <property type="expression patterns" value="baseline and differential"/>
</dbReference>
<dbReference type="GO" id="GO:0009507">
    <property type="term" value="C:chloroplast"/>
    <property type="evidence" value="ECO:0000314"/>
    <property type="project" value="TAIR"/>
</dbReference>
<dbReference type="GO" id="GO:0005829">
    <property type="term" value="C:cytosol"/>
    <property type="evidence" value="ECO:0000314"/>
    <property type="project" value="TAIR"/>
</dbReference>
<dbReference type="GO" id="GO:0005739">
    <property type="term" value="C:mitochondrion"/>
    <property type="evidence" value="ECO:0000314"/>
    <property type="project" value="TAIR"/>
</dbReference>
<dbReference type="GO" id="GO:0009536">
    <property type="term" value="C:plastid"/>
    <property type="evidence" value="ECO:0007005"/>
    <property type="project" value="TAIR"/>
</dbReference>
<dbReference type="GO" id="GO:0010181">
    <property type="term" value="F:FMN binding"/>
    <property type="evidence" value="ECO:0007669"/>
    <property type="project" value="InterPro"/>
</dbReference>
<dbReference type="GO" id="GO:0046872">
    <property type="term" value="F:metal ion binding"/>
    <property type="evidence" value="ECO:0007669"/>
    <property type="project" value="UniProtKB-KW"/>
</dbReference>
<dbReference type="GO" id="GO:0052856">
    <property type="term" value="F:NAD(P)HX epimerase activity"/>
    <property type="evidence" value="ECO:0000314"/>
    <property type="project" value="TAIR"/>
</dbReference>
<dbReference type="GO" id="GO:0004733">
    <property type="term" value="F:pyridoxamine phosphate oxidase activity"/>
    <property type="evidence" value="ECO:0000314"/>
    <property type="project" value="TAIR"/>
</dbReference>
<dbReference type="GO" id="GO:0006734">
    <property type="term" value="P:NADH metabolic process"/>
    <property type="evidence" value="ECO:0000315"/>
    <property type="project" value="TAIR"/>
</dbReference>
<dbReference type="GO" id="GO:0006739">
    <property type="term" value="P:NADP metabolic process"/>
    <property type="evidence" value="ECO:0000315"/>
    <property type="project" value="TAIR"/>
</dbReference>
<dbReference type="GO" id="GO:0008615">
    <property type="term" value="P:pyridoxine biosynthetic process"/>
    <property type="evidence" value="ECO:0007669"/>
    <property type="project" value="UniProtKB-KW"/>
</dbReference>
<dbReference type="FunFam" id="2.30.110.10:FF:000005">
    <property type="entry name" value="NAD(P)H-hydrate epimerase"/>
    <property type="match status" value="1"/>
</dbReference>
<dbReference type="FunFam" id="3.40.50.10260:FF:000006">
    <property type="entry name" value="NAD(P)H-hydrate epimerase"/>
    <property type="match status" value="1"/>
</dbReference>
<dbReference type="Gene3D" id="2.30.110.10">
    <property type="entry name" value="Electron Transport, Fmn-binding Protein, Chain A"/>
    <property type="match status" value="1"/>
</dbReference>
<dbReference type="Gene3D" id="3.40.50.10260">
    <property type="entry name" value="YjeF N-terminal domain"/>
    <property type="match status" value="1"/>
</dbReference>
<dbReference type="HAMAP" id="MF_01966">
    <property type="entry name" value="NADHX_epimerase"/>
    <property type="match status" value="1"/>
</dbReference>
<dbReference type="HAMAP" id="MF_01629">
    <property type="entry name" value="PdxH"/>
    <property type="match status" value="1"/>
</dbReference>
<dbReference type="InterPro" id="IPR000659">
    <property type="entry name" value="Pyridox_Oxase"/>
</dbReference>
<dbReference type="InterPro" id="IPR019740">
    <property type="entry name" value="Pyridox_Oxase_CS"/>
</dbReference>
<dbReference type="InterPro" id="IPR011576">
    <property type="entry name" value="Pyridox_Oxase_N"/>
</dbReference>
<dbReference type="InterPro" id="IPR021198">
    <property type="entry name" value="Pyridox_Oxase_pln"/>
</dbReference>
<dbReference type="InterPro" id="IPR019576">
    <property type="entry name" value="Pyridoxamine_oxidase_dimer_C"/>
</dbReference>
<dbReference type="InterPro" id="IPR012349">
    <property type="entry name" value="Split_barrel_FMN-bd"/>
</dbReference>
<dbReference type="InterPro" id="IPR004443">
    <property type="entry name" value="YjeF_N_dom"/>
</dbReference>
<dbReference type="InterPro" id="IPR036652">
    <property type="entry name" value="YjeF_N_dom_sf"/>
</dbReference>
<dbReference type="NCBIfam" id="TIGR00558">
    <property type="entry name" value="pdxH"/>
    <property type="match status" value="1"/>
</dbReference>
<dbReference type="NCBIfam" id="NF004231">
    <property type="entry name" value="PRK05679.1"/>
    <property type="match status" value="1"/>
</dbReference>
<dbReference type="NCBIfam" id="TIGR00197">
    <property type="entry name" value="yjeF_nterm"/>
    <property type="match status" value="1"/>
</dbReference>
<dbReference type="PANTHER" id="PTHR10851:SF0">
    <property type="entry name" value="PYRIDOXINE-5'-PHOSPHATE OXIDASE"/>
    <property type="match status" value="1"/>
</dbReference>
<dbReference type="PANTHER" id="PTHR10851">
    <property type="entry name" value="PYRIDOXINE-5-PHOSPHATE OXIDASE"/>
    <property type="match status" value="1"/>
</dbReference>
<dbReference type="Pfam" id="PF10590">
    <property type="entry name" value="PNP_phzG_C"/>
    <property type="match status" value="1"/>
</dbReference>
<dbReference type="Pfam" id="PF01243">
    <property type="entry name" value="PNPOx_N"/>
    <property type="match status" value="1"/>
</dbReference>
<dbReference type="Pfam" id="PF03853">
    <property type="entry name" value="YjeF_N"/>
    <property type="match status" value="1"/>
</dbReference>
<dbReference type="PIRSF" id="PIRSF037048">
    <property type="entry name" value="PyrdxN_5-P_Oxase_ross-cont_pln"/>
    <property type="match status" value="1"/>
</dbReference>
<dbReference type="SUPFAM" id="SSF50475">
    <property type="entry name" value="FMN-binding split barrel"/>
    <property type="match status" value="1"/>
</dbReference>
<dbReference type="SUPFAM" id="SSF64153">
    <property type="entry name" value="YjeF N-terminal domain-like"/>
    <property type="match status" value="1"/>
</dbReference>
<dbReference type="PROSITE" id="PS01064">
    <property type="entry name" value="PYRIDOX_OXIDASE"/>
    <property type="match status" value="1"/>
</dbReference>
<dbReference type="PROSITE" id="PS51385">
    <property type="entry name" value="YJEF_N"/>
    <property type="match status" value="1"/>
</dbReference>
<evidence type="ECO:0000250" key="1"/>
<evidence type="ECO:0000250" key="2">
    <source>
        <dbReference type="UniProtKB" id="P0AFI7"/>
    </source>
</evidence>
<evidence type="ECO:0000250" key="3">
    <source>
        <dbReference type="UniProtKB" id="Q9NVS9"/>
    </source>
</evidence>
<evidence type="ECO:0000269" key="4">
    <source>
    </source>
</evidence>
<evidence type="ECO:0000269" key="5">
    <source>
    </source>
</evidence>
<evidence type="ECO:0000269" key="6">
    <source>
    </source>
</evidence>
<evidence type="ECO:0000305" key="7"/>
<evidence type="ECO:0000305" key="8">
    <source>
    </source>
</evidence>
<evidence type="ECO:0007744" key="9">
    <source>
    </source>
</evidence>
<sequence>MRNVIRRVTTMTFTFLLQSPPLPISPSPPQFSLSSSPLSKTQRFITPSQGSRLRTLCTKVIIPNMQDSGSPPLSYLTQREAAEIDETLMGPLGFSIDQLMELAGLSVAASIAEVYKPEEYSRVLAICGPGNNGGDGLVAARHLHHFGYKPFICYPKRTAKPLYTGLVTQLDSLSVPFVSVEDLPDDLSKDFDVIVDAMFGFSFHGAPRPPFDDLIRRLVSLQNYEQTLQKHPVIVSVDIPSGWHVEEGDHEDGGIKPDMLVSLTAPKLCAKRFRGPHHFLGGRFVPPSVAEKYKLELPSYPGTSMCVRIGKPPKVDISAMRVNYVSPELLEEQVETDPTVQFRKWFDEAVAAGLRETNAMALSTANKDKKPSSRMVLLKGFDENGFVWFTNYESKKGSDLSENPSAALLFYWEILNRQVRIEGPVERIPESESENYFHSRPRGSQIGAIVSKQSSVVPGRHVLYDEYEELTKQYSDGSVIPKPKNWGGFRLKPNLFEFWQGQPSRLHDRLQYSLQDVNGNPAWKIHRLAP</sequence>